<protein>
    <recommendedName>
        <fullName evidence="1">Protein nucleotidyltransferase YdiU</fullName>
        <ecNumber evidence="1">2.7.7.-</ecNumber>
    </recommendedName>
    <alternativeName>
        <fullName evidence="1">Protein adenylyltransferase YdiU</fullName>
        <ecNumber evidence="1">2.7.7.108</ecNumber>
    </alternativeName>
    <alternativeName>
        <fullName evidence="1">Protein uridylyltransferase YdiU</fullName>
        <ecNumber evidence="1">2.7.7.-</ecNumber>
    </alternativeName>
</protein>
<feature type="chain" id="PRO_0000121403" description="Protein nucleotidyltransferase YdiU">
    <location>
        <begin position="1"/>
        <end position="487"/>
    </location>
</feature>
<feature type="active site" description="Proton acceptor" evidence="1">
    <location>
        <position position="247"/>
    </location>
</feature>
<feature type="binding site" evidence="1">
    <location>
        <position position="85"/>
    </location>
    <ligand>
        <name>ATP</name>
        <dbReference type="ChEBI" id="CHEBI:30616"/>
    </ligand>
</feature>
<feature type="binding site" evidence="1">
    <location>
        <position position="87"/>
    </location>
    <ligand>
        <name>ATP</name>
        <dbReference type="ChEBI" id="CHEBI:30616"/>
    </ligand>
</feature>
<feature type="binding site" evidence="1">
    <location>
        <position position="88"/>
    </location>
    <ligand>
        <name>ATP</name>
        <dbReference type="ChEBI" id="CHEBI:30616"/>
    </ligand>
</feature>
<feature type="binding site" evidence="1">
    <location>
        <position position="108"/>
    </location>
    <ligand>
        <name>ATP</name>
        <dbReference type="ChEBI" id="CHEBI:30616"/>
    </ligand>
</feature>
<feature type="binding site" evidence="1">
    <location>
        <position position="120"/>
    </location>
    <ligand>
        <name>ATP</name>
        <dbReference type="ChEBI" id="CHEBI:30616"/>
    </ligand>
</feature>
<feature type="binding site" evidence="1">
    <location>
        <position position="121"/>
    </location>
    <ligand>
        <name>ATP</name>
        <dbReference type="ChEBI" id="CHEBI:30616"/>
    </ligand>
</feature>
<feature type="binding site" evidence="1">
    <location>
        <position position="171"/>
    </location>
    <ligand>
        <name>ATP</name>
        <dbReference type="ChEBI" id="CHEBI:30616"/>
    </ligand>
</feature>
<feature type="binding site" evidence="1">
    <location>
        <position position="178"/>
    </location>
    <ligand>
        <name>ATP</name>
        <dbReference type="ChEBI" id="CHEBI:30616"/>
    </ligand>
</feature>
<feature type="binding site" evidence="1">
    <location>
        <position position="248"/>
    </location>
    <ligand>
        <name>Mg(2+)</name>
        <dbReference type="ChEBI" id="CHEBI:18420"/>
    </ligand>
</feature>
<feature type="binding site" evidence="1">
    <location>
        <position position="257"/>
    </location>
    <ligand>
        <name>ATP</name>
        <dbReference type="ChEBI" id="CHEBI:30616"/>
    </ligand>
</feature>
<feature type="binding site" evidence="1">
    <location>
        <position position="257"/>
    </location>
    <ligand>
        <name>Mg(2+)</name>
        <dbReference type="ChEBI" id="CHEBI:18420"/>
    </ligand>
</feature>
<keyword id="KW-0067">ATP-binding</keyword>
<keyword id="KW-0460">Magnesium</keyword>
<keyword id="KW-0464">Manganese</keyword>
<keyword id="KW-0479">Metal-binding</keyword>
<keyword id="KW-0547">Nucleotide-binding</keyword>
<keyword id="KW-0548">Nucleotidyltransferase</keyword>
<keyword id="KW-1185">Reference proteome</keyword>
<keyword id="KW-0808">Transferase</keyword>
<evidence type="ECO:0000255" key="1">
    <source>
        <dbReference type="HAMAP-Rule" id="MF_00692"/>
    </source>
</evidence>
<evidence type="ECO:0000305" key="2"/>
<sequence length="487" mass="53664">MMKFDNSYAHLPERFSAAVLPTPVKAPRLIAFNRTLAEELLLDVADLDDDRLAAIFSGNVVPQGAEPLAMAYAGHQFGGFVPQLGDGRAILLGEVIDVNGRRRDIQLKGSGPTPFSRRGDGRAALGPVLREYIVSEAMFALGIPATRALAAVLSGDRVQREVGLPGGVFTRVAASHIRVGTFQFFAAREDDEAIRSLADYVIDRHYPDAKNTENPYLALLRGIAERQCALIARWMMVGFIHGVMNTDNMAVSGETIDFGPCAFLDEYHPNKVFSSIDAQGRYAYNNQPGIAQWNIARLAECLLPLLDPEVEKAAELANAVLADFAAAFPQRWLTGMREKLGLTTEEEGDMDLIQSLLSLMQASEADFTLTFRRLSHAANGDAEPFRGMFIDIAGADAFLTRWRERAGREGISDSERSAAMLSINPAIIPRNHRIEELIEAAVEDGDFEPFHAMLTAIATPFEERPDNFVYMQPPMSHERVFRTFCGT</sequence>
<gene>
    <name evidence="1" type="primary">ydiU</name>
    <name evidence="1" type="synonym">selO</name>
    <name type="ordered locus">Atu0945</name>
    <name type="ORF">AGR_C_1725</name>
</gene>
<name>SELO_AGRFC</name>
<dbReference type="EC" id="2.7.7.-" evidence="1"/>
<dbReference type="EC" id="2.7.7.108" evidence="1"/>
<dbReference type="EMBL" id="AE007869">
    <property type="protein sequence ID" value="AAK86750.2"/>
    <property type="status" value="ALT_INIT"/>
    <property type="molecule type" value="Genomic_DNA"/>
</dbReference>
<dbReference type="PIR" id="AI2692">
    <property type="entry name" value="AI2692"/>
</dbReference>
<dbReference type="PIR" id="E97474">
    <property type="entry name" value="E97474"/>
</dbReference>
<dbReference type="RefSeq" id="NP_353965.2">
    <property type="nucleotide sequence ID" value="NC_003062.2"/>
</dbReference>
<dbReference type="RefSeq" id="WP_010971275.1">
    <property type="nucleotide sequence ID" value="NC_003062.2"/>
</dbReference>
<dbReference type="SMR" id="Q8UGU0"/>
<dbReference type="EnsemblBacteria" id="AAK86750">
    <property type="protein sequence ID" value="AAK86750"/>
    <property type="gene ID" value="Atu0945"/>
</dbReference>
<dbReference type="GeneID" id="1132983"/>
<dbReference type="KEGG" id="atu:Atu0945"/>
<dbReference type="PATRIC" id="fig|176299.10.peg.951"/>
<dbReference type="eggNOG" id="COG0397">
    <property type="taxonomic scope" value="Bacteria"/>
</dbReference>
<dbReference type="HOGENOM" id="CLU_010245_4_0_5"/>
<dbReference type="OrthoDB" id="9776281at2"/>
<dbReference type="BioCyc" id="AGRO:ATU0945-MONOMER"/>
<dbReference type="Proteomes" id="UP000000813">
    <property type="component" value="Chromosome circular"/>
</dbReference>
<dbReference type="GO" id="GO:0070733">
    <property type="term" value="F:AMPylase activity"/>
    <property type="evidence" value="ECO:0007669"/>
    <property type="project" value="RHEA"/>
</dbReference>
<dbReference type="GO" id="GO:0005524">
    <property type="term" value="F:ATP binding"/>
    <property type="evidence" value="ECO:0007669"/>
    <property type="project" value="UniProtKB-UniRule"/>
</dbReference>
<dbReference type="GO" id="GO:0000287">
    <property type="term" value="F:magnesium ion binding"/>
    <property type="evidence" value="ECO:0007669"/>
    <property type="project" value="UniProtKB-UniRule"/>
</dbReference>
<dbReference type="HAMAP" id="MF_00692">
    <property type="entry name" value="YdiU_SelO"/>
    <property type="match status" value="1"/>
</dbReference>
<dbReference type="InterPro" id="IPR003846">
    <property type="entry name" value="SelO"/>
</dbReference>
<dbReference type="NCBIfam" id="NF000658">
    <property type="entry name" value="PRK00029.1"/>
    <property type="match status" value="1"/>
</dbReference>
<dbReference type="PANTHER" id="PTHR32057">
    <property type="entry name" value="PROTEIN ADENYLYLTRANSFERASE SELO, MITOCHONDRIAL"/>
    <property type="match status" value="1"/>
</dbReference>
<dbReference type="PANTHER" id="PTHR32057:SF14">
    <property type="entry name" value="PROTEIN ADENYLYLTRANSFERASE SELO, MITOCHONDRIAL"/>
    <property type="match status" value="1"/>
</dbReference>
<dbReference type="Pfam" id="PF02696">
    <property type="entry name" value="SelO"/>
    <property type="match status" value="1"/>
</dbReference>
<reference key="1">
    <citation type="journal article" date="2001" name="Science">
        <title>The genome of the natural genetic engineer Agrobacterium tumefaciens C58.</title>
        <authorList>
            <person name="Wood D.W."/>
            <person name="Setubal J.C."/>
            <person name="Kaul R."/>
            <person name="Monks D.E."/>
            <person name="Kitajima J.P."/>
            <person name="Okura V.K."/>
            <person name="Zhou Y."/>
            <person name="Chen L."/>
            <person name="Wood G.E."/>
            <person name="Almeida N.F. Jr."/>
            <person name="Woo L."/>
            <person name="Chen Y."/>
            <person name="Paulsen I.T."/>
            <person name="Eisen J.A."/>
            <person name="Karp P.D."/>
            <person name="Bovee D. Sr."/>
            <person name="Chapman P."/>
            <person name="Clendenning J."/>
            <person name="Deatherage G."/>
            <person name="Gillet W."/>
            <person name="Grant C."/>
            <person name="Kutyavin T."/>
            <person name="Levy R."/>
            <person name="Li M.-J."/>
            <person name="McClelland E."/>
            <person name="Palmieri A."/>
            <person name="Raymond C."/>
            <person name="Rouse G."/>
            <person name="Saenphimmachak C."/>
            <person name="Wu Z."/>
            <person name="Romero P."/>
            <person name="Gordon D."/>
            <person name="Zhang S."/>
            <person name="Yoo H."/>
            <person name="Tao Y."/>
            <person name="Biddle P."/>
            <person name="Jung M."/>
            <person name="Krespan W."/>
            <person name="Perry M."/>
            <person name="Gordon-Kamm B."/>
            <person name="Liao L."/>
            <person name="Kim S."/>
            <person name="Hendrick C."/>
            <person name="Zhao Z.-Y."/>
            <person name="Dolan M."/>
            <person name="Chumley F."/>
            <person name="Tingey S.V."/>
            <person name="Tomb J.-F."/>
            <person name="Gordon M.P."/>
            <person name="Olson M.V."/>
            <person name="Nester E.W."/>
        </authorList>
    </citation>
    <scope>NUCLEOTIDE SEQUENCE [LARGE SCALE GENOMIC DNA]</scope>
    <source>
        <strain>C58 / ATCC 33970</strain>
    </source>
</reference>
<reference key="2">
    <citation type="journal article" date="2001" name="Science">
        <title>Genome sequence of the plant pathogen and biotechnology agent Agrobacterium tumefaciens C58.</title>
        <authorList>
            <person name="Goodner B."/>
            <person name="Hinkle G."/>
            <person name="Gattung S."/>
            <person name="Miller N."/>
            <person name="Blanchard M."/>
            <person name="Qurollo B."/>
            <person name="Goldman B.S."/>
            <person name="Cao Y."/>
            <person name="Askenazi M."/>
            <person name="Halling C."/>
            <person name="Mullin L."/>
            <person name="Houmiel K."/>
            <person name="Gordon J."/>
            <person name="Vaudin M."/>
            <person name="Iartchouk O."/>
            <person name="Epp A."/>
            <person name="Liu F."/>
            <person name="Wollam C."/>
            <person name="Allinger M."/>
            <person name="Doughty D."/>
            <person name="Scott C."/>
            <person name="Lappas C."/>
            <person name="Markelz B."/>
            <person name="Flanagan C."/>
            <person name="Crowell C."/>
            <person name="Gurson J."/>
            <person name="Lomo C."/>
            <person name="Sear C."/>
            <person name="Strub G."/>
            <person name="Cielo C."/>
            <person name="Slater S."/>
        </authorList>
    </citation>
    <scope>NUCLEOTIDE SEQUENCE [LARGE SCALE GENOMIC DNA]</scope>
    <source>
        <strain>C58 / ATCC 33970</strain>
    </source>
</reference>
<comment type="function">
    <text evidence="1">Nucleotidyltransferase involved in the post-translational modification of proteins. It can catalyze the addition of adenosine monophosphate (AMP) or uridine monophosphate (UMP) to a protein, resulting in modifications known as AMPylation and UMPylation.</text>
</comment>
<comment type="catalytic activity">
    <reaction evidence="1">
        <text>L-seryl-[protein] + ATP = 3-O-(5'-adenylyl)-L-seryl-[protein] + diphosphate</text>
        <dbReference type="Rhea" id="RHEA:58120"/>
        <dbReference type="Rhea" id="RHEA-COMP:9863"/>
        <dbReference type="Rhea" id="RHEA-COMP:15073"/>
        <dbReference type="ChEBI" id="CHEBI:29999"/>
        <dbReference type="ChEBI" id="CHEBI:30616"/>
        <dbReference type="ChEBI" id="CHEBI:33019"/>
        <dbReference type="ChEBI" id="CHEBI:142516"/>
        <dbReference type="EC" id="2.7.7.108"/>
    </reaction>
</comment>
<comment type="catalytic activity">
    <reaction evidence="1">
        <text>L-threonyl-[protein] + ATP = 3-O-(5'-adenylyl)-L-threonyl-[protein] + diphosphate</text>
        <dbReference type="Rhea" id="RHEA:54292"/>
        <dbReference type="Rhea" id="RHEA-COMP:11060"/>
        <dbReference type="Rhea" id="RHEA-COMP:13847"/>
        <dbReference type="ChEBI" id="CHEBI:30013"/>
        <dbReference type="ChEBI" id="CHEBI:30616"/>
        <dbReference type="ChEBI" id="CHEBI:33019"/>
        <dbReference type="ChEBI" id="CHEBI:138113"/>
        <dbReference type="EC" id="2.7.7.108"/>
    </reaction>
</comment>
<comment type="catalytic activity">
    <reaction evidence="1">
        <text>L-tyrosyl-[protein] + ATP = O-(5'-adenylyl)-L-tyrosyl-[protein] + diphosphate</text>
        <dbReference type="Rhea" id="RHEA:54288"/>
        <dbReference type="Rhea" id="RHEA-COMP:10136"/>
        <dbReference type="Rhea" id="RHEA-COMP:13846"/>
        <dbReference type="ChEBI" id="CHEBI:30616"/>
        <dbReference type="ChEBI" id="CHEBI:33019"/>
        <dbReference type="ChEBI" id="CHEBI:46858"/>
        <dbReference type="ChEBI" id="CHEBI:83624"/>
        <dbReference type="EC" id="2.7.7.108"/>
    </reaction>
</comment>
<comment type="catalytic activity">
    <reaction evidence="1">
        <text>L-histidyl-[protein] + UTP = N(tele)-(5'-uridylyl)-L-histidyl-[protein] + diphosphate</text>
        <dbReference type="Rhea" id="RHEA:83891"/>
        <dbReference type="Rhea" id="RHEA-COMP:9745"/>
        <dbReference type="Rhea" id="RHEA-COMP:20239"/>
        <dbReference type="ChEBI" id="CHEBI:29979"/>
        <dbReference type="ChEBI" id="CHEBI:33019"/>
        <dbReference type="ChEBI" id="CHEBI:46398"/>
        <dbReference type="ChEBI" id="CHEBI:233474"/>
    </reaction>
</comment>
<comment type="catalytic activity">
    <reaction evidence="1">
        <text>L-seryl-[protein] + UTP = O-(5'-uridylyl)-L-seryl-[protein] + diphosphate</text>
        <dbReference type="Rhea" id="RHEA:64604"/>
        <dbReference type="Rhea" id="RHEA-COMP:9863"/>
        <dbReference type="Rhea" id="RHEA-COMP:16635"/>
        <dbReference type="ChEBI" id="CHEBI:29999"/>
        <dbReference type="ChEBI" id="CHEBI:33019"/>
        <dbReference type="ChEBI" id="CHEBI:46398"/>
        <dbReference type="ChEBI" id="CHEBI:156051"/>
    </reaction>
</comment>
<comment type="catalytic activity">
    <reaction evidence="1">
        <text>L-tyrosyl-[protein] + UTP = O-(5'-uridylyl)-L-tyrosyl-[protein] + diphosphate</text>
        <dbReference type="Rhea" id="RHEA:83887"/>
        <dbReference type="Rhea" id="RHEA-COMP:10136"/>
        <dbReference type="Rhea" id="RHEA-COMP:20238"/>
        <dbReference type="ChEBI" id="CHEBI:33019"/>
        <dbReference type="ChEBI" id="CHEBI:46398"/>
        <dbReference type="ChEBI" id="CHEBI:46858"/>
        <dbReference type="ChEBI" id="CHEBI:90602"/>
    </reaction>
</comment>
<comment type="cofactor">
    <cofactor evidence="1">
        <name>Mg(2+)</name>
        <dbReference type="ChEBI" id="CHEBI:18420"/>
    </cofactor>
    <cofactor evidence="1">
        <name>Mn(2+)</name>
        <dbReference type="ChEBI" id="CHEBI:29035"/>
    </cofactor>
</comment>
<comment type="similarity">
    <text evidence="1">Belongs to the SELO family.</text>
</comment>
<comment type="sequence caution" evidence="2">
    <conflict type="erroneous initiation">
        <sequence resource="EMBL-CDS" id="AAK86750"/>
    </conflict>
</comment>
<accession>Q8UGU0</accession>
<proteinExistence type="inferred from homology"/>
<organism>
    <name type="scientific">Agrobacterium fabrum (strain C58 / ATCC 33970)</name>
    <name type="common">Agrobacterium tumefaciens (strain C58)</name>
    <dbReference type="NCBI Taxonomy" id="176299"/>
    <lineage>
        <taxon>Bacteria</taxon>
        <taxon>Pseudomonadati</taxon>
        <taxon>Pseudomonadota</taxon>
        <taxon>Alphaproteobacteria</taxon>
        <taxon>Hyphomicrobiales</taxon>
        <taxon>Rhizobiaceae</taxon>
        <taxon>Rhizobium/Agrobacterium group</taxon>
        <taxon>Agrobacterium</taxon>
        <taxon>Agrobacterium tumefaciens complex</taxon>
    </lineage>
</organism>